<feature type="chain" id="PRO_1000085161" description="Chaperone protein DnaJ">
    <location>
        <begin position="1"/>
        <end position="376"/>
    </location>
</feature>
<feature type="domain" description="J" evidence="1">
    <location>
        <begin position="5"/>
        <end position="70"/>
    </location>
</feature>
<feature type="repeat" description="CXXCXGXG motif">
    <location>
        <begin position="149"/>
        <end position="156"/>
    </location>
</feature>
<feature type="repeat" description="CXXCXGXG motif">
    <location>
        <begin position="166"/>
        <end position="173"/>
    </location>
</feature>
<feature type="repeat" description="CXXCXGXG motif">
    <location>
        <begin position="188"/>
        <end position="195"/>
    </location>
</feature>
<feature type="repeat" description="CXXCXGXG motif">
    <location>
        <begin position="202"/>
        <end position="209"/>
    </location>
</feature>
<feature type="zinc finger region" description="CR-type" evidence="1">
    <location>
        <begin position="136"/>
        <end position="214"/>
    </location>
</feature>
<feature type="binding site" evidence="1">
    <location>
        <position position="149"/>
    </location>
    <ligand>
        <name>Zn(2+)</name>
        <dbReference type="ChEBI" id="CHEBI:29105"/>
        <label>1</label>
    </ligand>
</feature>
<feature type="binding site" evidence="1">
    <location>
        <position position="152"/>
    </location>
    <ligand>
        <name>Zn(2+)</name>
        <dbReference type="ChEBI" id="CHEBI:29105"/>
        <label>1</label>
    </ligand>
</feature>
<feature type="binding site" evidence="1">
    <location>
        <position position="166"/>
    </location>
    <ligand>
        <name>Zn(2+)</name>
        <dbReference type="ChEBI" id="CHEBI:29105"/>
        <label>2</label>
    </ligand>
</feature>
<feature type="binding site" evidence="1">
    <location>
        <position position="169"/>
    </location>
    <ligand>
        <name>Zn(2+)</name>
        <dbReference type="ChEBI" id="CHEBI:29105"/>
        <label>2</label>
    </ligand>
</feature>
<feature type="binding site" evidence="1">
    <location>
        <position position="188"/>
    </location>
    <ligand>
        <name>Zn(2+)</name>
        <dbReference type="ChEBI" id="CHEBI:29105"/>
        <label>2</label>
    </ligand>
</feature>
<feature type="binding site" evidence="1">
    <location>
        <position position="191"/>
    </location>
    <ligand>
        <name>Zn(2+)</name>
        <dbReference type="ChEBI" id="CHEBI:29105"/>
        <label>2</label>
    </ligand>
</feature>
<feature type="binding site" evidence="1">
    <location>
        <position position="202"/>
    </location>
    <ligand>
        <name>Zn(2+)</name>
        <dbReference type="ChEBI" id="CHEBI:29105"/>
        <label>1</label>
    </ligand>
</feature>
<feature type="binding site" evidence="1">
    <location>
        <position position="205"/>
    </location>
    <ligand>
        <name>Zn(2+)</name>
        <dbReference type="ChEBI" id="CHEBI:29105"/>
        <label>1</label>
    </ligand>
</feature>
<evidence type="ECO:0000255" key="1">
    <source>
        <dbReference type="HAMAP-Rule" id="MF_01152"/>
    </source>
</evidence>
<dbReference type="EMBL" id="CP000124">
    <property type="protein sequence ID" value="ABA51099.1"/>
    <property type="molecule type" value="Genomic_DNA"/>
</dbReference>
<dbReference type="RefSeq" id="WP_004522147.1">
    <property type="nucleotide sequence ID" value="NC_007434.1"/>
</dbReference>
<dbReference type="SMR" id="Q3JP12"/>
<dbReference type="EnsemblBacteria" id="ABA51099">
    <property type="protein sequence ID" value="ABA51099"/>
    <property type="gene ID" value="BURPS1710b_3320"/>
</dbReference>
<dbReference type="GeneID" id="93061414"/>
<dbReference type="KEGG" id="bpm:BURPS1710b_3320"/>
<dbReference type="HOGENOM" id="CLU_017633_0_7_4"/>
<dbReference type="Proteomes" id="UP000002700">
    <property type="component" value="Chromosome I"/>
</dbReference>
<dbReference type="GO" id="GO:0005737">
    <property type="term" value="C:cytoplasm"/>
    <property type="evidence" value="ECO:0007669"/>
    <property type="project" value="UniProtKB-SubCell"/>
</dbReference>
<dbReference type="GO" id="GO:0005524">
    <property type="term" value="F:ATP binding"/>
    <property type="evidence" value="ECO:0007669"/>
    <property type="project" value="InterPro"/>
</dbReference>
<dbReference type="GO" id="GO:0031072">
    <property type="term" value="F:heat shock protein binding"/>
    <property type="evidence" value="ECO:0007669"/>
    <property type="project" value="InterPro"/>
</dbReference>
<dbReference type="GO" id="GO:0051082">
    <property type="term" value="F:unfolded protein binding"/>
    <property type="evidence" value="ECO:0007669"/>
    <property type="project" value="UniProtKB-UniRule"/>
</dbReference>
<dbReference type="GO" id="GO:0008270">
    <property type="term" value="F:zinc ion binding"/>
    <property type="evidence" value="ECO:0007669"/>
    <property type="project" value="UniProtKB-UniRule"/>
</dbReference>
<dbReference type="GO" id="GO:0051085">
    <property type="term" value="P:chaperone cofactor-dependent protein refolding"/>
    <property type="evidence" value="ECO:0007669"/>
    <property type="project" value="TreeGrafter"/>
</dbReference>
<dbReference type="GO" id="GO:0006260">
    <property type="term" value="P:DNA replication"/>
    <property type="evidence" value="ECO:0007669"/>
    <property type="project" value="UniProtKB-KW"/>
</dbReference>
<dbReference type="GO" id="GO:0042026">
    <property type="term" value="P:protein refolding"/>
    <property type="evidence" value="ECO:0007669"/>
    <property type="project" value="TreeGrafter"/>
</dbReference>
<dbReference type="GO" id="GO:0009408">
    <property type="term" value="P:response to heat"/>
    <property type="evidence" value="ECO:0007669"/>
    <property type="project" value="InterPro"/>
</dbReference>
<dbReference type="CDD" id="cd06257">
    <property type="entry name" value="DnaJ"/>
    <property type="match status" value="1"/>
</dbReference>
<dbReference type="CDD" id="cd10747">
    <property type="entry name" value="DnaJ_C"/>
    <property type="match status" value="1"/>
</dbReference>
<dbReference type="CDD" id="cd10719">
    <property type="entry name" value="DnaJ_zf"/>
    <property type="match status" value="1"/>
</dbReference>
<dbReference type="FunFam" id="1.10.287.110:FF:000031">
    <property type="entry name" value="Molecular chaperone DnaJ"/>
    <property type="match status" value="1"/>
</dbReference>
<dbReference type="FunFam" id="2.10.230.10:FF:000002">
    <property type="entry name" value="Molecular chaperone DnaJ"/>
    <property type="match status" value="1"/>
</dbReference>
<dbReference type="FunFam" id="2.60.260.20:FF:000004">
    <property type="entry name" value="Molecular chaperone DnaJ"/>
    <property type="match status" value="1"/>
</dbReference>
<dbReference type="Gene3D" id="1.10.287.110">
    <property type="entry name" value="DnaJ domain"/>
    <property type="match status" value="1"/>
</dbReference>
<dbReference type="Gene3D" id="2.10.230.10">
    <property type="entry name" value="Heat shock protein DnaJ, cysteine-rich domain"/>
    <property type="match status" value="1"/>
</dbReference>
<dbReference type="Gene3D" id="2.60.260.20">
    <property type="entry name" value="Urease metallochaperone UreE, N-terminal domain"/>
    <property type="match status" value="2"/>
</dbReference>
<dbReference type="HAMAP" id="MF_01152">
    <property type="entry name" value="DnaJ"/>
    <property type="match status" value="1"/>
</dbReference>
<dbReference type="InterPro" id="IPR012724">
    <property type="entry name" value="DnaJ"/>
</dbReference>
<dbReference type="InterPro" id="IPR002939">
    <property type="entry name" value="DnaJ_C"/>
</dbReference>
<dbReference type="InterPro" id="IPR001623">
    <property type="entry name" value="DnaJ_domain"/>
</dbReference>
<dbReference type="InterPro" id="IPR018253">
    <property type="entry name" value="DnaJ_domain_CS"/>
</dbReference>
<dbReference type="InterPro" id="IPR008971">
    <property type="entry name" value="HSP40/DnaJ_pept-bd"/>
</dbReference>
<dbReference type="InterPro" id="IPR001305">
    <property type="entry name" value="HSP_DnaJ_Cys-rich_dom"/>
</dbReference>
<dbReference type="InterPro" id="IPR036410">
    <property type="entry name" value="HSP_DnaJ_Cys-rich_dom_sf"/>
</dbReference>
<dbReference type="InterPro" id="IPR036869">
    <property type="entry name" value="J_dom_sf"/>
</dbReference>
<dbReference type="NCBIfam" id="TIGR02349">
    <property type="entry name" value="DnaJ_bact"/>
    <property type="match status" value="1"/>
</dbReference>
<dbReference type="NCBIfam" id="NF008035">
    <property type="entry name" value="PRK10767.1"/>
    <property type="match status" value="1"/>
</dbReference>
<dbReference type="PANTHER" id="PTHR43096:SF48">
    <property type="entry name" value="CHAPERONE PROTEIN DNAJ"/>
    <property type="match status" value="1"/>
</dbReference>
<dbReference type="PANTHER" id="PTHR43096">
    <property type="entry name" value="DNAJ HOMOLOG 1, MITOCHONDRIAL-RELATED"/>
    <property type="match status" value="1"/>
</dbReference>
<dbReference type="Pfam" id="PF00226">
    <property type="entry name" value="DnaJ"/>
    <property type="match status" value="1"/>
</dbReference>
<dbReference type="Pfam" id="PF01556">
    <property type="entry name" value="DnaJ_C"/>
    <property type="match status" value="1"/>
</dbReference>
<dbReference type="Pfam" id="PF00684">
    <property type="entry name" value="DnaJ_CXXCXGXG"/>
    <property type="match status" value="1"/>
</dbReference>
<dbReference type="PRINTS" id="PR00625">
    <property type="entry name" value="JDOMAIN"/>
</dbReference>
<dbReference type="SMART" id="SM00271">
    <property type="entry name" value="DnaJ"/>
    <property type="match status" value="1"/>
</dbReference>
<dbReference type="SUPFAM" id="SSF46565">
    <property type="entry name" value="Chaperone J-domain"/>
    <property type="match status" value="1"/>
</dbReference>
<dbReference type="SUPFAM" id="SSF57938">
    <property type="entry name" value="DnaJ/Hsp40 cysteine-rich domain"/>
    <property type="match status" value="1"/>
</dbReference>
<dbReference type="SUPFAM" id="SSF49493">
    <property type="entry name" value="HSP40/DnaJ peptide-binding domain"/>
    <property type="match status" value="2"/>
</dbReference>
<dbReference type="PROSITE" id="PS00636">
    <property type="entry name" value="DNAJ_1"/>
    <property type="match status" value="1"/>
</dbReference>
<dbReference type="PROSITE" id="PS50076">
    <property type="entry name" value="DNAJ_2"/>
    <property type="match status" value="1"/>
</dbReference>
<dbReference type="PROSITE" id="PS51188">
    <property type="entry name" value="ZF_CR"/>
    <property type="match status" value="1"/>
</dbReference>
<sequence>MAKRDYYEVLGVAKNASDDEIKKAYRKLAMKYHPDRNPDSKDAEEHFKEAKEAYEMLSDGQKRAAYDQYGHAGVDPNVGAAGAQGFGGFADAFGDIFGDIFGQAAGGGRARGGPQVYRGADLRYSMEITLEQAAHGYDTQIRVPSWAACGVCHGSGAKPGTKPETCPTCHGQGTVRMSQGFFSIQQTCPKCHGTGTYIPEPCVHCHGSGKVKETKTLEVKIPAGIDDGMRIRSAGNGEPGINGGPSGDLYVEIHIKPHAVFERDGDDLHCQMPIPFTTAALGGEIEVPTLAGRASFTVPEGTQSGKTFRLRGKGIKGLRSSIAGDLYVHVQVETPVKLTDQQRDLLKQFEKSLAEGGPRHSPQSKSWFDRVKSFFE</sequence>
<protein>
    <recommendedName>
        <fullName evidence="1">Chaperone protein DnaJ</fullName>
    </recommendedName>
</protein>
<organism>
    <name type="scientific">Burkholderia pseudomallei (strain 1710b)</name>
    <dbReference type="NCBI Taxonomy" id="320372"/>
    <lineage>
        <taxon>Bacteria</taxon>
        <taxon>Pseudomonadati</taxon>
        <taxon>Pseudomonadota</taxon>
        <taxon>Betaproteobacteria</taxon>
        <taxon>Burkholderiales</taxon>
        <taxon>Burkholderiaceae</taxon>
        <taxon>Burkholderia</taxon>
        <taxon>pseudomallei group</taxon>
    </lineage>
</organism>
<gene>
    <name evidence="1" type="primary">dnaJ</name>
    <name type="ordered locus">BURPS1710b_3320</name>
</gene>
<proteinExistence type="inferred from homology"/>
<name>DNAJ_BURP1</name>
<accession>Q3JP12</accession>
<keyword id="KW-0143">Chaperone</keyword>
<keyword id="KW-0963">Cytoplasm</keyword>
<keyword id="KW-0235">DNA replication</keyword>
<keyword id="KW-0479">Metal-binding</keyword>
<keyword id="KW-0677">Repeat</keyword>
<keyword id="KW-0346">Stress response</keyword>
<keyword id="KW-0862">Zinc</keyword>
<keyword id="KW-0863">Zinc-finger</keyword>
<comment type="function">
    <text evidence="1">Participates actively in the response to hyperosmotic and heat shock by preventing the aggregation of stress-denatured proteins and by disaggregating proteins, also in an autonomous, DnaK-independent fashion. Unfolded proteins bind initially to DnaJ; upon interaction with the DnaJ-bound protein, DnaK hydrolyzes its bound ATP, resulting in the formation of a stable complex. GrpE releases ADP from DnaK; ATP binding to DnaK triggers the release of the substrate protein, thus completing the reaction cycle. Several rounds of ATP-dependent interactions between DnaJ, DnaK and GrpE are required for fully efficient folding. Also involved, together with DnaK and GrpE, in the DNA replication of plasmids through activation of initiation proteins.</text>
</comment>
<comment type="cofactor">
    <cofactor evidence="1">
        <name>Zn(2+)</name>
        <dbReference type="ChEBI" id="CHEBI:29105"/>
    </cofactor>
    <text evidence="1">Binds 2 Zn(2+) ions per monomer.</text>
</comment>
<comment type="subunit">
    <text evidence="1">Homodimer.</text>
</comment>
<comment type="subcellular location">
    <subcellularLocation>
        <location evidence="1">Cytoplasm</location>
    </subcellularLocation>
</comment>
<comment type="domain">
    <text evidence="1">The J domain is necessary and sufficient to stimulate DnaK ATPase activity. Zinc center 1 plays an important role in the autonomous, DnaK-independent chaperone activity of DnaJ. Zinc center 2 is essential for interaction with DnaK and for DnaJ activity.</text>
</comment>
<comment type="similarity">
    <text evidence="1">Belongs to the DnaJ family.</text>
</comment>
<reference key="1">
    <citation type="journal article" date="2010" name="Genome Biol. Evol.">
        <title>Continuing evolution of Burkholderia mallei through genome reduction and large-scale rearrangements.</title>
        <authorList>
            <person name="Losada L."/>
            <person name="Ronning C.M."/>
            <person name="DeShazer D."/>
            <person name="Woods D."/>
            <person name="Fedorova N."/>
            <person name="Kim H.S."/>
            <person name="Shabalina S.A."/>
            <person name="Pearson T.R."/>
            <person name="Brinkac L."/>
            <person name="Tan P."/>
            <person name="Nandi T."/>
            <person name="Crabtree J."/>
            <person name="Badger J."/>
            <person name="Beckstrom-Sternberg S."/>
            <person name="Saqib M."/>
            <person name="Schutzer S.E."/>
            <person name="Keim P."/>
            <person name="Nierman W.C."/>
        </authorList>
    </citation>
    <scope>NUCLEOTIDE SEQUENCE [LARGE SCALE GENOMIC DNA]</scope>
    <source>
        <strain>1710b</strain>
    </source>
</reference>